<gene>
    <name type="ordered locus">SAB0437</name>
</gene>
<accession>Q2YVV7</accession>
<sequence length="82" mass="9831">MDSHFVYIVKCSDGSLYTGYAKDVNARVEKHNRGQGAKYTKVRRPVHLVYQEMYETKSEALKREYEIKTYTRQKKLRLIKER</sequence>
<reference key="1">
    <citation type="journal article" date="2007" name="PLoS ONE">
        <title>Molecular correlates of host specialization in Staphylococcus aureus.</title>
        <authorList>
            <person name="Herron-Olson L."/>
            <person name="Fitzgerald J.R."/>
            <person name="Musser J.M."/>
            <person name="Kapur V."/>
        </authorList>
    </citation>
    <scope>NUCLEOTIDE SEQUENCE [LARGE SCALE GENOMIC DNA]</scope>
    <source>
        <strain>bovine RF122 / ET3-1</strain>
    </source>
</reference>
<comment type="similarity">
    <text evidence="2">Belongs to the UPF0213 family.</text>
</comment>
<dbReference type="EMBL" id="AJ938182">
    <property type="protein sequence ID" value="CAI80125.1"/>
    <property type="molecule type" value="Genomic_DNA"/>
</dbReference>
<dbReference type="RefSeq" id="WP_000377064.1">
    <property type="nucleotide sequence ID" value="NC_007622.1"/>
</dbReference>
<dbReference type="SMR" id="Q2YVV7"/>
<dbReference type="KEGG" id="sab:SAB0437"/>
<dbReference type="HOGENOM" id="CLU_135650_0_3_9"/>
<dbReference type="CDD" id="cd10456">
    <property type="entry name" value="GIY-YIG_UPF0213"/>
    <property type="match status" value="1"/>
</dbReference>
<dbReference type="Gene3D" id="3.40.1440.10">
    <property type="entry name" value="GIY-YIG endonuclease"/>
    <property type="match status" value="1"/>
</dbReference>
<dbReference type="InterPro" id="IPR000305">
    <property type="entry name" value="GIY-YIG_endonuc"/>
</dbReference>
<dbReference type="InterPro" id="IPR035901">
    <property type="entry name" value="GIY-YIG_endonuc_sf"/>
</dbReference>
<dbReference type="InterPro" id="IPR050190">
    <property type="entry name" value="UPF0213_domain"/>
</dbReference>
<dbReference type="PANTHER" id="PTHR34477">
    <property type="entry name" value="UPF0213 PROTEIN YHBQ"/>
    <property type="match status" value="1"/>
</dbReference>
<dbReference type="PANTHER" id="PTHR34477:SF1">
    <property type="entry name" value="UPF0213 PROTEIN YHBQ"/>
    <property type="match status" value="1"/>
</dbReference>
<dbReference type="Pfam" id="PF01541">
    <property type="entry name" value="GIY-YIG"/>
    <property type="match status" value="1"/>
</dbReference>
<dbReference type="SMART" id="SM00465">
    <property type="entry name" value="GIYc"/>
    <property type="match status" value="1"/>
</dbReference>
<dbReference type="SUPFAM" id="SSF82771">
    <property type="entry name" value="GIY-YIG endonuclease"/>
    <property type="match status" value="1"/>
</dbReference>
<dbReference type="PROSITE" id="PS50164">
    <property type="entry name" value="GIY_YIG"/>
    <property type="match status" value="1"/>
</dbReference>
<feature type="chain" id="PRO_1000063688" description="UPF0213 protein SAB0437">
    <location>
        <begin position="1"/>
        <end position="82"/>
    </location>
</feature>
<feature type="domain" description="GIY-YIG" evidence="1">
    <location>
        <begin position="2"/>
        <end position="77"/>
    </location>
</feature>
<protein>
    <recommendedName>
        <fullName>UPF0213 protein SAB0437</fullName>
    </recommendedName>
</protein>
<evidence type="ECO:0000255" key="1">
    <source>
        <dbReference type="PROSITE-ProRule" id="PRU00977"/>
    </source>
</evidence>
<evidence type="ECO:0000305" key="2"/>
<name>Y437_STAAB</name>
<organism>
    <name type="scientific">Staphylococcus aureus (strain bovine RF122 / ET3-1)</name>
    <dbReference type="NCBI Taxonomy" id="273036"/>
    <lineage>
        <taxon>Bacteria</taxon>
        <taxon>Bacillati</taxon>
        <taxon>Bacillota</taxon>
        <taxon>Bacilli</taxon>
        <taxon>Bacillales</taxon>
        <taxon>Staphylococcaceae</taxon>
        <taxon>Staphylococcus</taxon>
    </lineage>
</organism>
<proteinExistence type="inferred from homology"/>